<feature type="chain" id="PRO_1000204676" description="Cell division topological specificity factor">
    <location>
        <begin position="1"/>
        <end position="84"/>
    </location>
</feature>
<organism>
    <name type="scientific">Azotobacter vinelandii (strain DJ / ATCC BAA-1303)</name>
    <dbReference type="NCBI Taxonomy" id="322710"/>
    <lineage>
        <taxon>Bacteria</taxon>
        <taxon>Pseudomonadati</taxon>
        <taxon>Pseudomonadota</taxon>
        <taxon>Gammaproteobacteria</taxon>
        <taxon>Pseudomonadales</taxon>
        <taxon>Pseudomonadaceae</taxon>
        <taxon>Azotobacter</taxon>
    </lineage>
</organism>
<reference key="1">
    <citation type="journal article" date="2009" name="J. Bacteriol.">
        <title>Genome sequence of Azotobacter vinelandii, an obligate aerobe specialized to support diverse anaerobic metabolic processes.</title>
        <authorList>
            <person name="Setubal J.C."/>
            <person name="Dos Santos P."/>
            <person name="Goldman B.S."/>
            <person name="Ertesvaag H."/>
            <person name="Espin G."/>
            <person name="Rubio L.M."/>
            <person name="Valla S."/>
            <person name="Almeida N.F."/>
            <person name="Balasubramanian D."/>
            <person name="Cromes L."/>
            <person name="Curatti L."/>
            <person name="Du Z."/>
            <person name="Godsy E."/>
            <person name="Goodner B."/>
            <person name="Hellner-Burris K."/>
            <person name="Hernandez J.A."/>
            <person name="Houmiel K."/>
            <person name="Imperial J."/>
            <person name="Kennedy C."/>
            <person name="Larson T.J."/>
            <person name="Latreille P."/>
            <person name="Ligon L.S."/>
            <person name="Lu J."/>
            <person name="Maerk M."/>
            <person name="Miller N.M."/>
            <person name="Norton S."/>
            <person name="O'Carroll I.P."/>
            <person name="Paulsen I."/>
            <person name="Raulfs E.C."/>
            <person name="Roemer R."/>
            <person name="Rosser J."/>
            <person name="Segura D."/>
            <person name="Slater S."/>
            <person name="Stricklin S.L."/>
            <person name="Studholme D.J."/>
            <person name="Sun J."/>
            <person name="Viana C.J."/>
            <person name="Wallin E."/>
            <person name="Wang B."/>
            <person name="Wheeler C."/>
            <person name="Zhu H."/>
            <person name="Dean D.R."/>
            <person name="Dixon R."/>
            <person name="Wood D."/>
        </authorList>
    </citation>
    <scope>NUCLEOTIDE SEQUENCE [LARGE SCALE GENOMIC DNA]</scope>
    <source>
        <strain>DJ / ATCC BAA-1303</strain>
    </source>
</reference>
<name>MINE_AZOVD</name>
<comment type="function">
    <text evidence="1">Prevents the cell division inhibition by proteins MinC and MinD at internal division sites while permitting inhibition at polar sites. This ensures cell division at the proper site by restricting the formation of a division septum at the midpoint of the long axis of the cell.</text>
</comment>
<comment type="similarity">
    <text evidence="1">Belongs to the MinE family.</text>
</comment>
<gene>
    <name evidence="1" type="primary">minE</name>
    <name type="ordered locus">Avin_35130</name>
</gene>
<dbReference type="EMBL" id="CP001157">
    <property type="protein sequence ID" value="ACO79662.1"/>
    <property type="molecule type" value="Genomic_DNA"/>
</dbReference>
<dbReference type="RefSeq" id="WP_012702042.1">
    <property type="nucleotide sequence ID" value="NC_012560.1"/>
</dbReference>
<dbReference type="SMR" id="C1DQM6"/>
<dbReference type="STRING" id="322710.Avin_35130"/>
<dbReference type="EnsemblBacteria" id="ACO79662">
    <property type="protein sequence ID" value="ACO79662"/>
    <property type="gene ID" value="Avin_35130"/>
</dbReference>
<dbReference type="GeneID" id="88186516"/>
<dbReference type="KEGG" id="avn:Avin_35130"/>
<dbReference type="eggNOG" id="COG0851">
    <property type="taxonomic scope" value="Bacteria"/>
</dbReference>
<dbReference type="HOGENOM" id="CLU_137929_2_2_6"/>
<dbReference type="OrthoDB" id="9802655at2"/>
<dbReference type="Proteomes" id="UP000002424">
    <property type="component" value="Chromosome"/>
</dbReference>
<dbReference type="GO" id="GO:0051301">
    <property type="term" value="P:cell division"/>
    <property type="evidence" value="ECO:0007669"/>
    <property type="project" value="UniProtKB-KW"/>
</dbReference>
<dbReference type="GO" id="GO:0032955">
    <property type="term" value="P:regulation of division septum assembly"/>
    <property type="evidence" value="ECO:0007669"/>
    <property type="project" value="InterPro"/>
</dbReference>
<dbReference type="FunFam" id="3.30.1070.10:FF:000001">
    <property type="entry name" value="Cell division topological specificity factor"/>
    <property type="match status" value="1"/>
</dbReference>
<dbReference type="Gene3D" id="3.30.1070.10">
    <property type="entry name" value="Cell division topological specificity factor MinE"/>
    <property type="match status" value="1"/>
</dbReference>
<dbReference type="HAMAP" id="MF_00262">
    <property type="entry name" value="MinE"/>
    <property type="match status" value="1"/>
</dbReference>
<dbReference type="InterPro" id="IPR005527">
    <property type="entry name" value="MinE"/>
</dbReference>
<dbReference type="InterPro" id="IPR036707">
    <property type="entry name" value="MinE_sf"/>
</dbReference>
<dbReference type="NCBIfam" id="TIGR01215">
    <property type="entry name" value="minE"/>
    <property type="match status" value="1"/>
</dbReference>
<dbReference type="NCBIfam" id="NF001422">
    <property type="entry name" value="PRK00296.1"/>
    <property type="match status" value="1"/>
</dbReference>
<dbReference type="Pfam" id="PF03776">
    <property type="entry name" value="MinE"/>
    <property type="match status" value="1"/>
</dbReference>
<dbReference type="SUPFAM" id="SSF55229">
    <property type="entry name" value="Cell division protein MinE topological specificity domain"/>
    <property type="match status" value="1"/>
</dbReference>
<accession>C1DQM6</accession>
<proteinExistence type="inferred from homology"/>
<evidence type="ECO:0000255" key="1">
    <source>
        <dbReference type="HAMAP-Rule" id="MF_00262"/>
    </source>
</evidence>
<sequence>MNLFDFFRERKKQSSASIAKERLQIIVAHERGQRSAPDYLPDLQKELIEVIRKYVNIDNDQVQVVLEDQGNCSILELNVTLPDR</sequence>
<protein>
    <recommendedName>
        <fullName evidence="1">Cell division topological specificity factor</fullName>
    </recommendedName>
</protein>
<keyword id="KW-0131">Cell cycle</keyword>
<keyword id="KW-0132">Cell division</keyword>